<organism>
    <name type="scientific">Crotalus atrox</name>
    <name type="common">Western diamondback rattlesnake</name>
    <dbReference type="NCBI Taxonomy" id="8730"/>
    <lineage>
        <taxon>Eukaryota</taxon>
        <taxon>Metazoa</taxon>
        <taxon>Chordata</taxon>
        <taxon>Craniata</taxon>
        <taxon>Vertebrata</taxon>
        <taxon>Euteleostomi</taxon>
        <taxon>Lepidosauria</taxon>
        <taxon>Squamata</taxon>
        <taxon>Bifurcata</taxon>
        <taxon>Unidentata</taxon>
        <taxon>Episquamata</taxon>
        <taxon>Toxicofera</taxon>
        <taxon>Serpentes</taxon>
        <taxon>Colubroidea</taxon>
        <taxon>Viperidae</taxon>
        <taxon>Crotalinae</taxon>
        <taxon>Crotalus</taxon>
    </lineage>
</organism>
<keyword id="KW-1222">Bradykinin receptor impairing toxin</keyword>
<keyword id="KW-0903">Direct protein sequencing</keyword>
<keyword id="KW-1213">G-protein coupled receptor impairing toxin</keyword>
<keyword id="KW-0964">Secreted</keyword>
<keyword id="KW-0800">Toxin</keyword>
<keyword id="KW-0838">Vasoactive</keyword>
<comment type="function">
    <text evidence="1">Bradykinin inhibitor peptide antagonizes the vasodilatory actions of bradykinin at the B2 bradykinin receptor (BDKRB2).</text>
</comment>
<comment type="subcellular location">
    <subcellularLocation>
        <location evidence="2">Secreted</location>
    </subcellularLocation>
</comment>
<comment type="tissue specificity">
    <text>Expressed by the venom gland.</text>
</comment>
<comment type="mass spectrometry" mass="1063.1" method="Unknown" evidence="2">
    <text>Average mass.</text>
</comment>
<comment type="similarity">
    <text evidence="3">Belongs to the bradykinin inhibitor peptide family.</text>
</comment>
<protein>
    <recommendedName>
        <fullName>Bradykinin inhibitor peptide</fullName>
        <shortName>BIP</shortName>
    </recommendedName>
</protein>
<evidence type="ECO:0000250" key="1"/>
<evidence type="ECO:0000269" key="2">
    <source>
    </source>
</evidence>
<evidence type="ECO:0000305" key="3"/>
<accession>P0CJ34</accession>
<sequence length="11" mass="1063">TPPAGPDVGPR</sequence>
<dbReference type="GO" id="GO:0005576">
    <property type="term" value="C:extracellular region"/>
    <property type="evidence" value="ECO:0007669"/>
    <property type="project" value="UniProtKB-SubCell"/>
</dbReference>
<dbReference type="GO" id="GO:0090729">
    <property type="term" value="F:toxin activity"/>
    <property type="evidence" value="ECO:0007669"/>
    <property type="project" value="UniProtKB-KW"/>
</dbReference>
<dbReference type="GO" id="GO:0097746">
    <property type="term" value="P:blood vessel diameter maintenance"/>
    <property type="evidence" value="ECO:0007669"/>
    <property type="project" value="UniProtKB-KW"/>
</dbReference>
<feature type="peptide" id="PRO_0000407585" description="Bradykinin inhibitor peptide">
    <location>
        <begin position="1"/>
        <end position="11"/>
    </location>
</feature>
<reference key="1">
    <citation type="journal article" date="2009" name="J. Proteome Res.">
        <title>Exploring the venom proteome of the western diamondback rattlesnake, Crotalus atrox, via snake venomics and combinatorial peptide ligand library approaches.</title>
        <authorList>
            <person name="Calvete J.J."/>
            <person name="Fasoli E."/>
            <person name="Sanz L."/>
            <person name="Boschetti E."/>
            <person name="Righetti P.G."/>
        </authorList>
    </citation>
    <scope>PROTEIN SEQUENCE</scope>
    <scope>SUBCELLULAR LOCATION</scope>
    <scope>MASS SPECTROMETRY</scope>
    <source>
        <tissue>Venom</tissue>
    </source>
</reference>
<proteinExistence type="evidence at protein level"/>
<name>BKIP_CROAT</name>